<evidence type="ECO:0000250" key="1"/>
<evidence type="ECO:0000255" key="2">
    <source>
        <dbReference type="PROSITE-ProRule" id="PRU00434"/>
    </source>
</evidence>
<evidence type="ECO:0000305" key="3"/>
<dbReference type="EC" id="7.-.-.-"/>
<dbReference type="EMBL" id="AE009439">
    <property type="protein sequence ID" value="AAM01399.1"/>
    <property type="molecule type" value="Genomic_DNA"/>
</dbReference>
<dbReference type="SMR" id="Q8TYV9"/>
<dbReference type="FunCoup" id="Q8TYV9">
    <property type="interactions" value="52"/>
</dbReference>
<dbReference type="STRING" id="190192.MK0182"/>
<dbReference type="PaxDb" id="190192-MK0182"/>
<dbReference type="EnsemblBacteria" id="AAM01399">
    <property type="protein sequence ID" value="AAM01399"/>
    <property type="gene ID" value="MK0182"/>
</dbReference>
<dbReference type="KEGG" id="mka:MK0182"/>
<dbReference type="PATRIC" id="fig|190192.8.peg.182"/>
<dbReference type="HOGENOM" id="CLU_000604_1_22_2"/>
<dbReference type="InParanoid" id="Q8TYV9"/>
<dbReference type="Proteomes" id="UP000001826">
    <property type="component" value="Chromosome"/>
</dbReference>
<dbReference type="GO" id="GO:0043190">
    <property type="term" value="C:ATP-binding cassette (ABC) transporter complex"/>
    <property type="evidence" value="ECO:0007669"/>
    <property type="project" value="TreeGrafter"/>
</dbReference>
<dbReference type="GO" id="GO:0005524">
    <property type="term" value="F:ATP binding"/>
    <property type="evidence" value="ECO:0007669"/>
    <property type="project" value="UniProtKB-KW"/>
</dbReference>
<dbReference type="GO" id="GO:0016887">
    <property type="term" value="F:ATP hydrolysis activity"/>
    <property type="evidence" value="ECO:0007669"/>
    <property type="project" value="InterPro"/>
</dbReference>
<dbReference type="GO" id="GO:0042626">
    <property type="term" value="F:ATPase-coupled transmembrane transporter activity"/>
    <property type="evidence" value="ECO:0007669"/>
    <property type="project" value="TreeGrafter"/>
</dbReference>
<dbReference type="CDD" id="cd03225">
    <property type="entry name" value="ABC_cobalt_CbiO_domain1"/>
    <property type="match status" value="1"/>
</dbReference>
<dbReference type="FunFam" id="3.40.50.300:FF:000224">
    <property type="entry name" value="Energy-coupling factor transporter ATP-binding protein EcfA"/>
    <property type="match status" value="1"/>
</dbReference>
<dbReference type="Gene3D" id="3.40.50.300">
    <property type="entry name" value="P-loop containing nucleotide triphosphate hydrolases"/>
    <property type="match status" value="1"/>
</dbReference>
<dbReference type="InterPro" id="IPR003593">
    <property type="entry name" value="AAA+_ATPase"/>
</dbReference>
<dbReference type="InterPro" id="IPR003439">
    <property type="entry name" value="ABC_transporter-like_ATP-bd"/>
</dbReference>
<dbReference type="InterPro" id="IPR017871">
    <property type="entry name" value="ABC_transporter-like_CS"/>
</dbReference>
<dbReference type="InterPro" id="IPR015856">
    <property type="entry name" value="ABC_transpr_CbiO/EcfA_su"/>
</dbReference>
<dbReference type="InterPro" id="IPR050095">
    <property type="entry name" value="ECF_ABC_transporter_ATP-bd"/>
</dbReference>
<dbReference type="InterPro" id="IPR027417">
    <property type="entry name" value="P-loop_NTPase"/>
</dbReference>
<dbReference type="PANTHER" id="PTHR43553:SF24">
    <property type="entry name" value="ENERGY-COUPLING FACTOR TRANSPORTER ATP-BINDING PROTEIN ECFA1"/>
    <property type="match status" value="1"/>
</dbReference>
<dbReference type="PANTHER" id="PTHR43553">
    <property type="entry name" value="HEAVY METAL TRANSPORTER"/>
    <property type="match status" value="1"/>
</dbReference>
<dbReference type="Pfam" id="PF00005">
    <property type="entry name" value="ABC_tran"/>
    <property type="match status" value="1"/>
</dbReference>
<dbReference type="SMART" id="SM00382">
    <property type="entry name" value="AAA"/>
    <property type="match status" value="1"/>
</dbReference>
<dbReference type="SUPFAM" id="SSF52540">
    <property type="entry name" value="P-loop containing nucleoside triphosphate hydrolases"/>
    <property type="match status" value="1"/>
</dbReference>
<dbReference type="PROSITE" id="PS00211">
    <property type="entry name" value="ABC_TRANSPORTER_1"/>
    <property type="match status" value="1"/>
</dbReference>
<dbReference type="PROSITE" id="PS50893">
    <property type="entry name" value="ABC_TRANSPORTER_2"/>
    <property type="match status" value="1"/>
</dbReference>
<name>Y182_METKA</name>
<sequence>MTHEYPDGTCAVCGLSLRVKEGESVVVLGPNGSGKTTLLHHILGLLTPTKGHIRVLGHDLPDGVREVRKRIGVVFQDVDDQLIMPTVLEDVAFGLVNRGMPREEAFERAREILERLGIEDLEDRPPQFLSGGQKRLVALAGAVAPEPDLLILDEPTSGLDFRATRLFVRLIRELKEELGFTMILTTFDVDIAAALAERVVVIREGKTVAEGSPEDILTDVDLIRESGLKPPEHVELLRRLGIENPPLDISEAEELLVAMLGEESRGNP</sequence>
<organism>
    <name type="scientific">Methanopyrus kandleri (strain AV19 / DSM 6324 / JCM 9639 / NBRC 100938)</name>
    <dbReference type="NCBI Taxonomy" id="190192"/>
    <lineage>
        <taxon>Archaea</taxon>
        <taxon>Methanobacteriati</taxon>
        <taxon>Methanobacteriota</taxon>
        <taxon>Methanomada group</taxon>
        <taxon>Methanopyri</taxon>
        <taxon>Methanopyrales</taxon>
        <taxon>Methanopyraceae</taxon>
        <taxon>Methanopyrus</taxon>
    </lineage>
</organism>
<proteinExistence type="inferred from homology"/>
<reference key="1">
    <citation type="journal article" date="2002" name="Proc. Natl. Acad. Sci. U.S.A.">
        <title>The complete genome of hyperthermophile Methanopyrus kandleri AV19 and monophyly of archaeal methanogens.</title>
        <authorList>
            <person name="Slesarev A.I."/>
            <person name="Mezhevaya K.V."/>
            <person name="Makarova K.S."/>
            <person name="Polushin N.N."/>
            <person name="Shcherbinina O.V."/>
            <person name="Shakhova V.V."/>
            <person name="Belova G.I."/>
            <person name="Aravind L."/>
            <person name="Natale D.A."/>
            <person name="Rogozin I.B."/>
            <person name="Tatusov R.L."/>
            <person name="Wolf Y.I."/>
            <person name="Stetter K.O."/>
            <person name="Malykh A.G."/>
            <person name="Koonin E.V."/>
            <person name="Kozyavkin S.A."/>
        </authorList>
    </citation>
    <scope>NUCLEOTIDE SEQUENCE [LARGE SCALE GENOMIC DNA]</scope>
    <source>
        <strain>AV19 / DSM 6324 / JCM 9639 / NBRC 100938</strain>
    </source>
</reference>
<accession>Q8TYV9</accession>
<gene>
    <name type="ordered locus">MK0182</name>
</gene>
<keyword id="KW-0067">ATP-binding</keyword>
<keyword id="KW-1003">Cell membrane</keyword>
<keyword id="KW-0472">Membrane</keyword>
<keyword id="KW-0547">Nucleotide-binding</keyword>
<keyword id="KW-1185">Reference proteome</keyword>
<keyword id="KW-1278">Translocase</keyword>
<keyword id="KW-0813">Transport</keyword>
<comment type="function">
    <text evidence="1">Probably part of an ABC transporter complex. Responsible for energy coupling to the transport system (By similarity).</text>
</comment>
<comment type="subcellular location">
    <subcellularLocation>
        <location evidence="1">Cell membrane</location>
        <topology evidence="1">Peripheral membrane protein</topology>
    </subcellularLocation>
</comment>
<comment type="similarity">
    <text evidence="3">Belongs to the ABC transporter superfamily.</text>
</comment>
<feature type="chain" id="PRO_0000092143" description="Putative ABC transporter ATP-binding protein MK0182">
    <location>
        <begin position="1"/>
        <end position="268"/>
    </location>
</feature>
<feature type="domain" description="ABC transporter" evidence="2">
    <location>
        <begin position="1"/>
        <end position="229"/>
    </location>
</feature>
<feature type="binding site" evidence="2">
    <location>
        <begin position="29"/>
        <end position="36"/>
    </location>
    <ligand>
        <name>ATP</name>
        <dbReference type="ChEBI" id="CHEBI:30616"/>
    </ligand>
</feature>
<protein>
    <recommendedName>
        <fullName>Putative ABC transporter ATP-binding protein MK0182</fullName>
        <ecNumber>7.-.-.-</ecNumber>
    </recommendedName>
</protein>